<protein>
    <recommendedName>
        <fullName evidence="1">Multidrug resistance protein MdtA</fullName>
    </recommendedName>
    <alternativeName>
        <fullName evidence="1">Multidrug transporter MdtA</fullName>
    </alternativeName>
</protein>
<dbReference type="EMBL" id="AE014075">
    <property type="protein sequence ID" value="AAN81056.1"/>
    <property type="status" value="ALT_INIT"/>
    <property type="molecule type" value="Genomic_DNA"/>
</dbReference>
<dbReference type="RefSeq" id="WP_000678936.1">
    <property type="nucleotide sequence ID" value="NZ_CP051263.1"/>
</dbReference>
<dbReference type="SMR" id="Q8CVX8"/>
<dbReference type="STRING" id="199310.c2600"/>
<dbReference type="KEGG" id="ecc:c2600"/>
<dbReference type="eggNOG" id="COG0845">
    <property type="taxonomic scope" value="Bacteria"/>
</dbReference>
<dbReference type="HOGENOM" id="CLU_018816_2_0_6"/>
<dbReference type="Proteomes" id="UP000001410">
    <property type="component" value="Chromosome"/>
</dbReference>
<dbReference type="GO" id="GO:1990281">
    <property type="term" value="C:efflux pump complex"/>
    <property type="evidence" value="ECO:0007669"/>
    <property type="project" value="TreeGrafter"/>
</dbReference>
<dbReference type="GO" id="GO:0005886">
    <property type="term" value="C:plasma membrane"/>
    <property type="evidence" value="ECO:0007669"/>
    <property type="project" value="UniProtKB-SubCell"/>
</dbReference>
<dbReference type="GO" id="GO:0015562">
    <property type="term" value="F:efflux transmembrane transporter activity"/>
    <property type="evidence" value="ECO:0007669"/>
    <property type="project" value="TreeGrafter"/>
</dbReference>
<dbReference type="FunFam" id="2.40.420.20:FF:000001">
    <property type="entry name" value="Efflux RND transporter periplasmic adaptor subunit"/>
    <property type="match status" value="1"/>
</dbReference>
<dbReference type="FunFam" id="1.10.287.470:FF:000005">
    <property type="entry name" value="Multidrug resistance protein MdtA"/>
    <property type="match status" value="1"/>
</dbReference>
<dbReference type="FunFam" id="2.40.30.170:FF:000006">
    <property type="entry name" value="Multidrug resistance protein MdtA"/>
    <property type="match status" value="1"/>
</dbReference>
<dbReference type="Gene3D" id="2.40.30.170">
    <property type="match status" value="1"/>
</dbReference>
<dbReference type="Gene3D" id="2.40.420.20">
    <property type="match status" value="1"/>
</dbReference>
<dbReference type="Gene3D" id="2.40.50.100">
    <property type="match status" value="1"/>
</dbReference>
<dbReference type="Gene3D" id="1.10.287.470">
    <property type="entry name" value="Helix hairpin bin"/>
    <property type="match status" value="1"/>
</dbReference>
<dbReference type="HAMAP" id="MF_01422">
    <property type="entry name" value="MdtA"/>
    <property type="match status" value="1"/>
</dbReference>
<dbReference type="InterPro" id="IPR032317">
    <property type="entry name" value="CusB_D23"/>
</dbReference>
<dbReference type="InterPro" id="IPR022824">
    <property type="entry name" value="Multidrug-R_MdtA"/>
</dbReference>
<dbReference type="InterPro" id="IPR006143">
    <property type="entry name" value="RND_pump_MFP"/>
</dbReference>
<dbReference type="NCBIfam" id="NF008589">
    <property type="entry name" value="PRK11556.1"/>
    <property type="match status" value="1"/>
</dbReference>
<dbReference type="NCBIfam" id="TIGR01730">
    <property type="entry name" value="RND_mfp"/>
    <property type="match status" value="1"/>
</dbReference>
<dbReference type="PANTHER" id="PTHR30469">
    <property type="entry name" value="MULTIDRUG RESISTANCE PROTEIN MDTA"/>
    <property type="match status" value="1"/>
</dbReference>
<dbReference type="PANTHER" id="PTHR30469:SF12">
    <property type="entry name" value="MULTIDRUG RESISTANCE PROTEIN MDTA"/>
    <property type="match status" value="1"/>
</dbReference>
<dbReference type="Pfam" id="PF16576">
    <property type="entry name" value="HlyD_D23"/>
    <property type="match status" value="1"/>
</dbReference>
<dbReference type="SUPFAM" id="SSF111369">
    <property type="entry name" value="HlyD-like secretion proteins"/>
    <property type="match status" value="1"/>
</dbReference>
<keyword id="KW-0997">Cell inner membrane</keyword>
<keyword id="KW-1003">Cell membrane</keyword>
<keyword id="KW-0472">Membrane</keyword>
<keyword id="KW-1185">Reference proteome</keyword>
<keyword id="KW-0732">Signal</keyword>
<keyword id="KW-0813">Transport</keyword>
<accession>Q8CVX8</accession>
<sequence>MKGSYKSRWVIVIVVVIAAIAAFWFWQGRNDSQSAAPGATKQAQQSPAGGRRGMRADPLAPVQAATAVEQAVPRYLTGLGTITAANTVTVRSRVDGQLMALHFQEGQQVKAGDLLAEIDPSQFKVALAQAQGQLAKDKATLANARRDLARYQQLAKTNLVSRQELDAQQALVSETEGTIKADEASVASAQLQLDWSRITAPVDGRVGLKQVDVGNQISSGDTTGIVVITQTHPIDLVFTLPESDIATVVQAQKAGKPLVVEAWDRTNSKKLSEGTLLSLDNQIDATTGTIKVKARFNNQDDALFPNQFVNARMLVDTEQNAVVIPTAALQMGNEGHFVWVLNSENKVSKHLVTPGIQDSQKVVIRAGISAGDRVVTDGIDRLTEGAKVEVVETQSATTPEEKATSREYAKKGARS</sequence>
<proteinExistence type="inferred from homology"/>
<reference key="1">
    <citation type="journal article" date="2002" name="Proc. Natl. Acad. Sci. U.S.A.">
        <title>Extensive mosaic structure revealed by the complete genome sequence of uropathogenic Escherichia coli.</title>
        <authorList>
            <person name="Welch R.A."/>
            <person name="Burland V."/>
            <person name="Plunkett G. III"/>
            <person name="Redford P."/>
            <person name="Roesch P."/>
            <person name="Rasko D."/>
            <person name="Buckles E.L."/>
            <person name="Liou S.-R."/>
            <person name="Boutin A."/>
            <person name="Hackett J."/>
            <person name="Stroud D."/>
            <person name="Mayhew G.F."/>
            <person name="Rose D.J."/>
            <person name="Zhou S."/>
            <person name="Schwartz D.C."/>
            <person name="Perna N.T."/>
            <person name="Mobley H.L.T."/>
            <person name="Donnenberg M.S."/>
            <person name="Blattner F.R."/>
        </authorList>
    </citation>
    <scope>NUCLEOTIDE SEQUENCE [LARGE SCALE GENOMIC DNA]</scope>
    <source>
        <strain>CFT073 / ATCC 700928 / UPEC</strain>
    </source>
</reference>
<organism>
    <name type="scientific">Escherichia coli O6:H1 (strain CFT073 / ATCC 700928 / UPEC)</name>
    <dbReference type="NCBI Taxonomy" id="199310"/>
    <lineage>
        <taxon>Bacteria</taxon>
        <taxon>Pseudomonadati</taxon>
        <taxon>Pseudomonadota</taxon>
        <taxon>Gammaproteobacteria</taxon>
        <taxon>Enterobacterales</taxon>
        <taxon>Enterobacteriaceae</taxon>
        <taxon>Escherichia</taxon>
    </lineage>
</organism>
<gene>
    <name evidence="1" type="primary">mdtA</name>
    <name type="ordered locus">c2600</name>
</gene>
<feature type="signal peptide" evidence="1">
    <location>
        <begin position="1"/>
        <end position="21"/>
    </location>
</feature>
<feature type="chain" id="PRO_0000018701" description="Multidrug resistance protein MdtA">
    <location>
        <begin position="22"/>
        <end position="415"/>
    </location>
</feature>
<feature type="region of interest" description="Disordered" evidence="2">
    <location>
        <begin position="31"/>
        <end position="56"/>
    </location>
</feature>
<feature type="region of interest" description="Disordered" evidence="2">
    <location>
        <begin position="390"/>
        <end position="415"/>
    </location>
</feature>
<feature type="compositionally biased region" description="Polar residues" evidence="2">
    <location>
        <begin position="31"/>
        <end position="47"/>
    </location>
</feature>
<feature type="compositionally biased region" description="Basic and acidic residues" evidence="2">
    <location>
        <begin position="399"/>
        <end position="415"/>
    </location>
</feature>
<evidence type="ECO:0000255" key="1">
    <source>
        <dbReference type="HAMAP-Rule" id="MF_01422"/>
    </source>
</evidence>
<evidence type="ECO:0000256" key="2">
    <source>
        <dbReference type="SAM" id="MobiDB-lite"/>
    </source>
</evidence>
<evidence type="ECO:0000305" key="3"/>
<name>MDTA_ECOL6</name>
<comment type="function">
    <text evidence="1">The MdtABC tripartite complex confers resistance against novobiocin and deoxycholate.</text>
</comment>
<comment type="subunit">
    <text evidence="1">Part of a tripartite efflux system composed of MdtA, MdtB and MdtC.</text>
</comment>
<comment type="subcellular location">
    <subcellularLocation>
        <location evidence="1">Cell inner membrane</location>
        <topology evidence="1">Peripheral membrane protein</topology>
    </subcellularLocation>
</comment>
<comment type="induction">
    <text evidence="1">The mdtABC operon is transcriptionally activated by BaeR.</text>
</comment>
<comment type="similarity">
    <text evidence="1">Belongs to the membrane fusion protein (MFP) (TC 8.A.1) family.</text>
</comment>
<comment type="sequence caution" evidence="3">
    <conflict type="erroneous initiation">
        <sequence resource="EMBL-CDS" id="AAN81056"/>
    </conflict>
</comment>